<protein>
    <recommendedName>
        <fullName evidence="1">Small ribosomal subunit protein uS19</fullName>
    </recommendedName>
    <alternativeName>
        <fullName evidence="2">30S ribosomal protein S19</fullName>
    </alternativeName>
</protein>
<proteinExistence type="inferred from homology"/>
<organism>
    <name type="scientific">Mycolicibacterium vanbaalenii (strain DSM 7251 / JCM 13017 / BCRC 16820 / KCTC 9966 / NRRL B-24157 / PYR-1)</name>
    <name type="common">Mycobacterium vanbaalenii</name>
    <dbReference type="NCBI Taxonomy" id="350058"/>
    <lineage>
        <taxon>Bacteria</taxon>
        <taxon>Bacillati</taxon>
        <taxon>Actinomycetota</taxon>
        <taxon>Actinomycetes</taxon>
        <taxon>Mycobacteriales</taxon>
        <taxon>Mycobacteriaceae</taxon>
        <taxon>Mycolicibacterium</taxon>
    </lineage>
</organism>
<feature type="chain" id="PRO_1000051084" description="Small ribosomal subunit protein uS19">
    <location>
        <begin position="1"/>
        <end position="93"/>
    </location>
</feature>
<sequence length="93" mass="10774">MPRSLKKGPFVDDHLLKKVDVQNEKNTKQVIKTWSRRSTIIPDFIGHTFAVHDGRKHVPVFVTEAMVGHKLGEFAPTRTFKGHIKDDRKSKRR</sequence>
<dbReference type="EMBL" id="CP000511">
    <property type="protein sequence ID" value="ABM12143.1"/>
    <property type="molecule type" value="Genomic_DNA"/>
</dbReference>
<dbReference type="RefSeq" id="WP_003892827.1">
    <property type="nucleotide sequence ID" value="NZ_JACKSD010000069.1"/>
</dbReference>
<dbReference type="SMR" id="A1T4P3"/>
<dbReference type="STRING" id="350058.Mvan_1309"/>
<dbReference type="GeneID" id="93456284"/>
<dbReference type="KEGG" id="mva:Mvan_1309"/>
<dbReference type="eggNOG" id="COG0185">
    <property type="taxonomic scope" value="Bacteria"/>
</dbReference>
<dbReference type="HOGENOM" id="CLU_144911_0_1_11"/>
<dbReference type="Proteomes" id="UP000009159">
    <property type="component" value="Chromosome"/>
</dbReference>
<dbReference type="GO" id="GO:0005737">
    <property type="term" value="C:cytoplasm"/>
    <property type="evidence" value="ECO:0007669"/>
    <property type="project" value="UniProtKB-ARBA"/>
</dbReference>
<dbReference type="GO" id="GO:0015935">
    <property type="term" value="C:small ribosomal subunit"/>
    <property type="evidence" value="ECO:0007669"/>
    <property type="project" value="InterPro"/>
</dbReference>
<dbReference type="GO" id="GO:0019843">
    <property type="term" value="F:rRNA binding"/>
    <property type="evidence" value="ECO:0007669"/>
    <property type="project" value="UniProtKB-UniRule"/>
</dbReference>
<dbReference type="GO" id="GO:0003735">
    <property type="term" value="F:structural constituent of ribosome"/>
    <property type="evidence" value="ECO:0007669"/>
    <property type="project" value="InterPro"/>
</dbReference>
<dbReference type="GO" id="GO:0000028">
    <property type="term" value="P:ribosomal small subunit assembly"/>
    <property type="evidence" value="ECO:0007669"/>
    <property type="project" value="TreeGrafter"/>
</dbReference>
<dbReference type="GO" id="GO:0006412">
    <property type="term" value="P:translation"/>
    <property type="evidence" value="ECO:0007669"/>
    <property type="project" value="UniProtKB-UniRule"/>
</dbReference>
<dbReference type="FunFam" id="3.30.860.10:FF:000001">
    <property type="entry name" value="30S ribosomal protein S19"/>
    <property type="match status" value="1"/>
</dbReference>
<dbReference type="Gene3D" id="3.30.860.10">
    <property type="entry name" value="30s Ribosomal Protein S19, Chain A"/>
    <property type="match status" value="1"/>
</dbReference>
<dbReference type="HAMAP" id="MF_00531">
    <property type="entry name" value="Ribosomal_uS19"/>
    <property type="match status" value="1"/>
</dbReference>
<dbReference type="InterPro" id="IPR002222">
    <property type="entry name" value="Ribosomal_uS19"/>
</dbReference>
<dbReference type="InterPro" id="IPR005732">
    <property type="entry name" value="Ribosomal_uS19_bac-type"/>
</dbReference>
<dbReference type="InterPro" id="IPR020934">
    <property type="entry name" value="Ribosomal_uS19_CS"/>
</dbReference>
<dbReference type="InterPro" id="IPR023575">
    <property type="entry name" value="Ribosomal_uS19_SF"/>
</dbReference>
<dbReference type="NCBIfam" id="TIGR01050">
    <property type="entry name" value="rpsS_bact"/>
    <property type="match status" value="1"/>
</dbReference>
<dbReference type="PANTHER" id="PTHR11880">
    <property type="entry name" value="RIBOSOMAL PROTEIN S19P FAMILY MEMBER"/>
    <property type="match status" value="1"/>
</dbReference>
<dbReference type="PANTHER" id="PTHR11880:SF8">
    <property type="entry name" value="SMALL RIBOSOMAL SUBUNIT PROTEIN US19M"/>
    <property type="match status" value="1"/>
</dbReference>
<dbReference type="Pfam" id="PF00203">
    <property type="entry name" value="Ribosomal_S19"/>
    <property type="match status" value="1"/>
</dbReference>
<dbReference type="PIRSF" id="PIRSF002144">
    <property type="entry name" value="Ribosomal_S19"/>
    <property type="match status" value="1"/>
</dbReference>
<dbReference type="PRINTS" id="PR00975">
    <property type="entry name" value="RIBOSOMALS19"/>
</dbReference>
<dbReference type="SUPFAM" id="SSF54570">
    <property type="entry name" value="Ribosomal protein S19"/>
    <property type="match status" value="1"/>
</dbReference>
<dbReference type="PROSITE" id="PS00323">
    <property type="entry name" value="RIBOSOMAL_S19"/>
    <property type="match status" value="1"/>
</dbReference>
<evidence type="ECO:0000255" key="1">
    <source>
        <dbReference type="HAMAP-Rule" id="MF_00531"/>
    </source>
</evidence>
<evidence type="ECO:0000305" key="2"/>
<gene>
    <name evidence="1" type="primary">rpsS</name>
    <name type="ordered locus">Mvan_1309</name>
</gene>
<comment type="function">
    <text evidence="1">Protein S19 forms a complex with S13 that binds strongly to the 16S ribosomal RNA.</text>
</comment>
<comment type="similarity">
    <text evidence="1">Belongs to the universal ribosomal protein uS19 family.</text>
</comment>
<accession>A1T4P3</accession>
<keyword id="KW-0687">Ribonucleoprotein</keyword>
<keyword id="KW-0689">Ribosomal protein</keyword>
<keyword id="KW-0694">RNA-binding</keyword>
<keyword id="KW-0699">rRNA-binding</keyword>
<reference key="1">
    <citation type="submission" date="2006-12" db="EMBL/GenBank/DDBJ databases">
        <title>Complete sequence of Mycobacterium vanbaalenii PYR-1.</title>
        <authorList>
            <consortium name="US DOE Joint Genome Institute"/>
            <person name="Copeland A."/>
            <person name="Lucas S."/>
            <person name="Lapidus A."/>
            <person name="Barry K."/>
            <person name="Detter J.C."/>
            <person name="Glavina del Rio T."/>
            <person name="Hammon N."/>
            <person name="Israni S."/>
            <person name="Dalin E."/>
            <person name="Tice H."/>
            <person name="Pitluck S."/>
            <person name="Singan V."/>
            <person name="Schmutz J."/>
            <person name="Larimer F."/>
            <person name="Land M."/>
            <person name="Hauser L."/>
            <person name="Kyrpides N."/>
            <person name="Anderson I.J."/>
            <person name="Miller C."/>
            <person name="Richardson P."/>
        </authorList>
    </citation>
    <scope>NUCLEOTIDE SEQUENCE [LARGE SCALE GENOMIC DNA]</scope>
    <source>
        <strain>DSM 7251 / JCM 13017 / BCRC 16820 / KCTC 9966 / NRRL B-24157 / PYR-1</strain>
    </source>
</reference>
<name>RS19_MYCVP</name>